<name>I17RD_CHICK</name>
<proteinExistence type="evidence at transcript level"/>
<keyword id="KW-0325">Glycoprotein</keyword>
<keyword id="KW-0472">Membrane</keyword>
<keyword id="KW-0675">Receptor</keyword>
<keyword id="KW-1185">Reference proteome</keyword>
<keyword id="KW-0732">Signal</keyword>
<keyword id="KW-0812">Transmembrane</keyword>
<keyword id="KW-1133">Transmembrane helix</keyword>
<dbReference type="EMBL" id="AY278204">
    <property type="protein sequence ID" value="AAP70001.1"/>
    <property type="molecule type" value="mRNA"/>
</dbReference>
<dbReference type="EMBL" id="AJ508679">
    <property type="protein sequence ID" value="CAD48485.1"/>
    <property type="molecule type" value="mRNA"/>
</dbReference>
<dbReference type="RefSeq" id="NP_989846.1">
    <property type="nucleotide sequence ID" value="NM_204515.1"/>
</dbReference>
<dbReference type="SMR" id="Q7T2L7"/>
<dbReference type="FunCoup" id="Q7T2L7">
    <property type="interactions" value="774"/>
</dbReference>
<dbReference type="STRING" id="9031.ENSGALP00000008813"/>
<dbReference type="GlyCosmos" id="Q7T2L7">
    <property type="glycosylation" value="5 sites, No reported glycans"/>
</dbReference>
<dbReference type="GlyGen" id="Q7T2L7">
    <property type="glycosylation" value="6 sites"/>
</dbReference>
<dbReference type="PaxDb" id="9031-ENSGALP00000008813"/>
<dbReference type="GeneID" id="395186"/>
<dbReference type="KEGG" id="gga:395186"/>
<dbReference type="CTD" id="54756"/>
<dbReference type="VEuPathDB" id="HostDB:geneid_395186"/>
<dbReference type="eggNOG" id="ENOG502QV61">
    <property type="taxonomic scope" value="Eukaryota"/>
</dbReference>
<dbReference type="InParanoid" id="Q7T2L7"/>
<dbReference type="OrthoDB" id="9325096at2759"/>
<dbReference type="PhylomeDB" id="Q7T2L7"/>
<dbReference type="PRO" id="PR:Q7T2L7"/>
<dbReference type="Proteomes" id="UP000000539">
    <property type="component" value="Unassembled WGS sequence"/>
</dbReference>
<dbReference type="GO" id="GO:0016020">
    <property type="term" value="C:membrane"/>
    <property type="evidence" value="ECO:0007669"/>
    <property type="project" value="UniProtKB-SubCell"/>
</dbReference>
<dbReference type="GO" id="GO:0030368">
    <property type="term" value="F:interleukin-17 receptor activity"/>
    <property type="evidence" value="ECO:0000318"/>
    <property type="project" value="GO_Central"/>
</dbReference>
<dbReference type="FunFam" id="3.40.50.11530:FF:000003">
    <property type="entry name" value="Interleukin-17 receptor D"/>
    <property type="match status" value="1"/>
</dbReference>
<dbReference type="Gene3D" id="3.40.50.11530">
    <property type="match status" value="1"/>
</dbReference>
<dbReference type="InterPro" id="IPR039465">
    <property type="entry name" value="IL-17_rcpt-like"/>
</dbReference>
<dbReference type="InterPro" id="IPR031951">
    <property type="entry name" value="IL17R_D_N"/>
</dbReference>
<dbReference type="InterPro" id="IPR013568">
    <property type="entry name" value="SEFIR_dom"/>
</dbReference>
<dbReference type="InterPro" id="IPR035897">
    <property type="entry name" value="Toll_tir_struct_dom_sf"/>
</dbReference>
<dbReference type="PANTHER" id="PTHR15583">
    <property type="entry name" value="INTERLEUKIN-17 RECEPTOR"/>
    <property type="match status" value="1"/>
</dbReference>
<dbReference type="PANTHER" id="PTHR15583:SF14">
    <property type="entry name" value="INTERLEUKIN-17 RECEPTOR D"/>
    <property type="match status" value="1"/>
</dbReference>
<dbReference type="Pfam" id="PF16742">
    <property type="entry name" value="IL17R_D_N"/>
    <property type="match status" value="1"/>
</dbReference>
<dbReference type="Pfam" id="PF08357">
    <property type="entry name" value="SEFIR"/>
    <property type="match status" value="1"/>
</dbReference>
<dbReference type="SUPFAM" id="SSF52200">
    <property type="entry name" value="Toll/Interleukin receptor TIR domain"/>
    <property type="match status" value="1"/>
</dbReference>
<dbReference type="PROSITE" id="PS51534">
    <property type="entry name" value="SEFIR"/>
    <property type="match status" value="1"/>
</dbReference>
<sequence length="741" mass="83554">MAPGRELGAFLLALLAFCGGRRLAEAAGGPGGRRGAAADACGGRGLSSVTKSNGLLNITFKYDNCTPYLNSVGKHVIGDVQNITISQYACYEQVAVTILWTANAIGIEYLRGFRVILEELKSEGRQCQQMVLRDPKQLSPSFKRTGMESNPFANLKFETDYFVKIVPFPSIKNESNYHPFFFRTRPCELLLQPENLICKPYWKPRNLNVTQQGFNMQVSFDHAPHNFGFRYYFLHYKLKHEGPFKQKTCKQDQNTDTTSCILQNVTPGDYIIELVDDTNTTRKTMHYALKPVHSPWAGPIRAIAITVPLVVISAFATLFTVMCRKKQQENIYSHLDEESSESSAYGAGLPVERLRPRPKVFICYSSKDCQKHINVIQCFAYFLQDFCGCEVALDLWEDLKICKESQKEWLIKKINESQFIIIVCSKGMKYFVEKKNWKHRGVTKDTGKGELFLFAVFTVAEKLRQAKQNSNDLCKFIAVYFDYSCEGDIPGILDLSTKYKLMDNLPQLYSHLHSRDLSVQDSEVFPVNVSKRNYFRSKSGRSLYVAICNMHQFIDQEPDWFEKQFIPFLPHPLHYSEPVMEKFDSGLVLNDLVNKQAADDDFYLKTDVNIISAGSSDSHCIIQHLNLGEDVETQDIQRGGSSVLRPLLHAVKASNLKDMPRDSGIYDSSVPSSELSLPLMEGLLTDQTETSSITGSVSSSSGLGEEEPPVITSTKFLLPGICKAELHCHIHTDELQAIAPL</sequence>
<accession>Q7T2L7</accession>
<accession>Q8AV76</accession>
<gene>
    <name type="primary">IL17RD</name>
    <name type="synonym">SEF</name>
</gene>
<evidence type="ECO:0000250" key="1"/>
<evidence type="ECO:0000250" key="2">
    <source>
        <dbReference type="UniProtKB" id="Q8JZL1"/>
    </source>
</evidence>
<evidence type="ECO:0000255" key="3"/>
<evidence type="ECO:0000255" key="4">
    <source>
        <dbReference type="PROSITE-ProRule" id="PRU00867"/>
    </source>
</evidence>
<evidence type="ECO:0000256" key="5">
    <source>
        <dbReference type="SAM" id="MobiDB-lite"/>
    </source>
</evidence>
<organism>
    <name type="scientific">Gallus gallus</name>
    <name type="common">Chicken</name>
    <dbReference type="NCBI Taxonomy" id="9031"/>
    <lineage>
        <taxon>Eukaryota</taxon>
        <taxon>Metazoa</taxon>
        <taxon>Chordata</taxon>
        <taxon>Craniata</taxon>
        <taxon>Vertebrata</taxon>
        <taxon>Euteleostomi</taxon>
        <taxon>Archelosauria</taxon>
        <taxon>Archosauria</taxon>
        <taxon>Dinosauria</taxon>
        <taxon>Saurischia</taxon>
        <taxon>Theropoda</taxon>
        <taxon>Coelurosauria</taxon>
        <taxon>Aves</taxon>
        <taxon>Neognathae</taxon>
        <taxon>Galloanserae</taxon>
        <taxon>Galliformes</taxon>
        <taxon>Phasianidae</taxon>
        <taxon>Phasianinae</taxon>
        <taxon>Gallus</taxon>
    </lineage>
</organism>
<reference key="1">
    <citation type="journal article" date="2003" name="Nat. Cell Biol.">
        <title>MKP3 mediates the cellular response to FGF8 signalling in the vertebrate limb.</title>
        <authorList>
            <person name="Kawakami Y."/>
            <person name="Rodriguez-Leon J."/>
            <person name="Koth C.M."/>
            <person name="Buescher D."/>
            <person name="Itoh T."/>
            <person name="Raya A."/>
            <person name="Ng J.K."/>
            <person name="Rodriguez Esteban C."/>
            <person name="Takahashi S."/>
            <person name="Henrique D."/>
            <person name="Schwarz M.-F."/>
            <person name="Asahara H."/>
            <person name="Izpisua Belmonte J.C."/>
        </authorList>
    </citation>
    <scope>NUCLEOTIDE SEQUENCE [MRNA]</scope>
</reference>
<reference key="2">
    <citation type="submission" date="2002-09" db="EMBL/GenBank/DDBJ databases">
        <authorList>
            <person name="Neubueser A."/>
        </authorList>
    </citation>
    <scope>NUCLEOTIDE SEQUENCE [MRNA] OF 45-741</scope>
    <source>
        <tissue>Mesenchymal cell</tissue>
    </source>
</reference>
<protein>
    <recommendedName>
        <fullName>Interleukin-17 receptor D</fullName>
        <shortName>IL-17 receptor D</shortName>
        <shortName>IL-17RD</shortName>
    </recommendedName>
    <alternativeName>
        <fullName>Sef homolog</fullName>
        <shortName>cSEF</shortName>
    </alternativeName>
</protein>
<feature type="signal peptide" evidence="3">
    <location>
        <begin position="1"/>
        <end position="26"/>
    </location>
</feature>
<feature type="chain" id="PRO_0000041873" description="Interleukin-17 receptor D">
    <location>
        <begin position="27"/>
        <end position="741"/>
    </location>
</feature>
<feature type="topological domain" description="Extracellular" evidence="3">
    <location>
        <begin position="27"/>
        <end position="301"/>
    </location>
</feature>
<feature type="transmembrane region" description="Helical" evidence="3">
    <location>
        <begin position="302"/>
        <end position="322"/>
    </location>
</feature>
<feature type="topological domain" description="Cytoplasmic" evidence="3">
    <location>
        <begin position="323"/>
        <end position="741"/>
    </location>
</feature>
<feature type="domain" description="SEFIR" evidence="4">
    <location>
        <begin position="357"/>
        <end position="510"/>
    </location>
</feature>
<feature type="region of interest" description="Disordered" evidence="5">
    <location>
        <begin position="688"/>
        <end position="708"/>
    </location>
</feature>
<feature type="compositionally biased region" description="Low complexity" evidence="5">
    <location>
        <begin position="688"/>
        <end position="703"/>
    </location>
</feature>
<feature type="glycosylation site" description="N-linked (GlcNAc...) asparagine" evidence="3">
    <location>
        <position position="57"/>
    </location>
</feature>
<feature type="glycosylation site" description="N-linked (GlcNAc...) asparagine" evidence="3">
    <location>
        <position position="82"/>
    </location>
</feature>
<feature type="glycosylation site" description="N-linked (GlcNAc...) asparagine" evidence="3">
    <location>
        <position position="173"/>
    </location>
</feature>
<feature type="glycosylation site" description="N-linked (GlcNAc...) asparagine" evidence="3">
    <location>
        <position position="208"/>
    </location>
</feature>
<feature type="glycosylation site" description="N-linked (GlcNAc...) asparagine" evidence="3">
    <location>
        <position position="279"/>
    </location>
</feature>
<comment type="function">
    <text evidence="1 2">Feedback inhibitor of fibroblast growth factor mediated Ras-MAPK signaling and ERK activation. May inhibit FGF-induced FGFR1 tyrosine phosphorylation (By similarity). Inhibits TGFB-induced epithelial-to-mesenchymal transition in lens epithelial cells (By similarity).</text>
</comment>
<comment type="subcellular location">
    <subcellularLocation>
        <location>Membrane</location>
        <topology>Single-pass type I membrane protein</topology>
    </subcellularLocation>
</comment>